<feature type="chain" id="PRO_0000054631" description="11-beta-hydroxysteroid dehydrogenase type 2">
    <location>
        <begin position="1"/>
        <end position="427"/>
    </location>
</feature>
<feature type="active site" description="Proton acceptor" evidence="5">
    <location>
        <position position="232"/>
    </location>
</feature>
<feature type="binding site" evidence="1">
    <location>
        <begin position="82"/>
        <end position="111"/>
    </location>
    <ligand>
        <name>NAD(+)</name>
        <dbReference type="ChEBI" id="CHEBI:57540"/>
    </ligand>
</feature>
<feature type="binding site" evidence="1">
    <location>
        <position position="219"/>
    </location>
    <ligand>
        <name>substrate</name>
    </ligand>
</feature>
<protein>
    <recommendedName>
        <fullName>11-beta-hydroxysteroid dehydrogenase type 2</fullName>
        <shortName>11-DH2</shortName>
        <shortName>11-beta-HSD2</shortName>
        <ecNumber evidence="7">1.1.1.-</ecNumber>
    </recommendedName>
    <alternativeName>
        <fullName>Corticosteroid 11-beta-dehydrogenase isozyme 2</fullName>
    </alternativeName>
    <alternativeName>
        <fullName>NAD-dependent 11-beta-hydroxysteroid dehydrogenase</fullName>
    </alternativeName>
</protein>
<gene>
    <name type="primary">HSD11B2</name>
    <name type="synonym">HSD11K</name>
</gene>
<name>DHI2_SHEEP</name>
<dbReference type="EC" id="1.1.1.-" evidence="7"/>
<dbReference type="EMBL" id="U14128">
    <property type="protein sequence ID" value="AAA93156.1"/>
    <property type="status" value="ALT_SEQ"/>
    <property type="molecule type" value="mRNA"/>
</dbReference>
<dbReference type="PIR" id="A55353">
    <property type="entry name" value="A55353"/>
</dbReference>
<dbReference type="RefSeq" id="NP_001009460.1">
    <property type="nucleotide sequence ID" value="NM_001009460.1"/>
</dbReference>
<dbReference type="SMR" id="P50168"/>
<dbReference type="STRING" id="9940.ENSOARP00000003179"/>
<dbReference type="PaxDb" id="9940-ENSOARP00000003179"/>
<dbReference type="GeneID" id="443530"/>
<dbReference type="KEGG" id="oas:443530"/>
<dbReference type="CTD" id="3291"/>
<dbReference type="eggNOG" id="KOG1610">
    <property type="taxonomic scope" value="Eukaryota"/>
</dbReference>
<dbReference type="OrthoDB" id="9876299at2759"/>
<dbReference type="BRENDA" id="1.1.1.146">
    <property type="organism ID" value="2668"/>
</dbReference>
<dbReference type="Proteomes" id="UP000002356">
    <property type="component" value="Unplaced"/>
</dbReference>
<dbReference type="GO" id="GO:0005783">
    <property type="term" value="C:endoplasmic reticulum"/>
    <property type="evidence" value="ECO:0007669"/>
    <property type="project" value="UniProtKB-SubCell"/>
</dbReference>
<dbReference type="GO" id="GO:0070523">
    <property type="term" value="F:11-beta-hydroxysteroid dehydrogenase (NAD+) activity"/>
    <property type="evidence" value="ECO:0007669"/>
    <property type="project" value="TreeGrafter"/>
</dbReference>
<dbReference type="GO" id="GO:0008211">
    <property type="term" value="P:glucocorticoid metabolic process"/>
    <property type="evidence" value="ECO:0007669"/>
    <property type="project" value="TreeGrafter"/>
</dbReference>
<dbReference type="CDD" id="cd09805">
    <property type="entry name" value="type2_17beta_HSD-like_SDR_c"/>
    <property type="match status" value="1"/>
</dbReference>
<dbReference type="FunFam" id="3.40.50.720:FF:000074">
    <property type="entry name" value="Retinol dehydrogenase type 1"/>
    <property type="match status" value="1"/>
</dbReference>
<dbReference type="Gene3D" id="3.40.50.720">
    <property type="entry name" value="NAD(P)-binding Rossmann-like Domain"/>
    <property type="match status" value="1"/>
</dbReference>
<dbReference type="InterPro" id="IPR036291">
    <property type="entry name" value="NAD(P)-bd_dom_sf"/>
</dbReference>
<dbReference type="InterPro" id="IPR020904">
    <property type="entry name" value="Sc_DH/Rdtase_CS"/>
</dbReference>
<dbReference type="InterPro" id="IPR002347">
    <property type="entry name" value="SDR_fam"/>
</dbReference>
<dbReference type="PANTHER" id="PTHR43313:SF2">
    <property type="entry name" value="11-BETA-HYDROXYSTEROID DEHYDROGENASE TYPE 2"/>
    <property type="match status" value="1"/>
</dbReference>
<dbReference type="PANTHER" id="PTHR43313">
    <property type="entry name" value="SHORT-CHAIN DEHYDROGENASE/REDUCTASE FAMILY 9C"/>
    <property type="match status" value="1"/>
</dbReference>
<dbReference type="Pfam" id="PF00106">
    <property type="entry name" value="adh_short"/>
    <property type="match status" value="1"/>
</dbReference>
<dbReference type="PRINTS" id="PR00081">
    <property type="entry name" value="GDHRDH"/>
</dbReference>
<dbReference type="SUPFAM" id="SSF51735">
    <property type="entry name" value="NAD(P)-binding Rossmann-fold domains"/>
    <property type="match status" value="1"/>
</dbReference>
<dbReference type="PROSITE" id="PS00061">
    <property type="entry name" value="ADH_SHORT"/>
    <property type="match status" value="1"/>
</dbReference>
<evidence type="ECO:0000250" key="1"/>
<evidence type="ECO:0000250" key="2">
    <source>
        <dbReference type="UniProtKB" id="O77667"/>
    </source>
</evidence>
<evidence type="ECO:0000250" key="3">
    <source>
        <dbReference type="UniProtKB" id="P51661"/>
    </source>
</evidence>
<evidence type="ECO:0000250" key="4">
    <source>
        <dbReference type="UniProtKB" id="P80365"/>
    </source>
</evidence>
<evidence type="ECO:0000255" key="5">
    <source>
        <dbReference type="PROSITE-ProRule" id="PRU10001"/>
    </source>
</evidence>
<evidence type="ECO:0000269" key="6">
    <source>
    </source>
</evidence>
<evidence type="ECO:0000269" key="7">
    <source>
    </source>
</evidence>
<evidence type="ECO:0000303" key="8">
    <source>
    </source>
</evidence>
<evidence type="ECO:0000303" key="9">
    <source>
    </source>
</evidence>
<evidence type="ECO:0000305" key="10"/>
<evidence type="ECO:0000305" key="11">
    <source>
    </source>
</evidence>
<comment type="function">
    <text evidence="2 3 4 6 7 8 9">Catalyzes the conversion of biologically active 11beta-hydroxyglucocorticoids (11beta-hydroxysteroid) such as cortisol, to inactive 11-ketoglucocorticoids (11-oxosteroid) such as cortisone, in the presence of NAD(+) (PubMed:7588402, PubMed:7929304). Functions as a dehydrogenase (oxidase), thereby decreasing the concentration of active glucocorticoids, thus protecting the nonselective mineralocorticoid receptor from occupation by glucocorticoids (PubMed:7588402, PubMed:7929304). Plays an important role in maintaining glucocorticoids balance during preimplantation and protects the fetus from excessive maternal corticosterone exposure (By similarity). Catalyzes the oxidation of 11beta-hydroxytestosterone (11beta,17beta-dihydroxyandrost-4-ene-3-one) to 11-ketotestosterone (17beta-hydroxyandrost-4-ene-3,11-dione), a major bioactive androgen. Catalyzes the conversion of 11beta-hydroxyandrostenedione (11beta-hydroxyandrost-4-ene-3,17-dione) to 11-ketoandrostenedione (androst-4-ene-3,11,17-trione), which can be further metabolized to 11-ketotestosterone. Converts 7-beta-25-dihydroxycholesterol to 7-oxo-25-hydroxycholesterol in vitro. 7-beta-25-dihydroxycholesterol (not 7-oxo-25-hydroxycholesterol) acts as a ligand for the G-protein-coupled receptor (GPCR) Epstein-Barr virus-induced gene 2 (EBI2) and may thereby regulate immune cell migration (By similarity). May protect ovulating oocytes and fertilizing spermatozoa from the adverse effects of cortisol (By similarity).</text>
</comment>
<comment type="catalytic activity">
    <reaction evidence="7">
        <text>an 11beta-hydroxysteroid + NAD(+) = an 11-oxosteroid + NADH + H(+)</text>
        <dbReference type="Rhea" id="RHEA:53116"/>
        <dbReference type="ChEBI" id="CHEBI:15378"/>
        <dbReference type="ChEBI" id="CHEBI:35346"/>
        <dbReference type="ChEBI" id="CHEBI:47787"/>
        <dbReference type="ChEBI" id="CHEBI:57540"/>
        <dbReference type="ChEBI" id="CHEBI:57945"/>
    </reaction>
    <physiologicalReaction direction="left-to-right" evidence="11">
        <dbReference type="Rhea" id="RHEA:53117"/>
    </physiologicalReaction>
</comment>
<comment type="catalytic activity">
    <reaction evidence="7">
        <text>corticosterone + NAD(+) = 11-dehydrocorticosterone + NADH + H(+)</text>
        <dbReference type="Rhea" id="RHEA:42204"/>
        <dbReference type="ChEBI" id="CHEBI:15378"/>
        <dbReference type="ChEBI" id="CHEBI:16827"/>
        <dbReference type="ChEBI" id="CHEBI:57540"/>
        <dbReference type="ChEBI" id="CHEBI:57945"/>
        <dbReference type="ChEBI" id="CHEBI:78600"/>
    </reaction>
    <physiologicalReaction direction="left-to-right" evidence="11">
        <dbReference type="Rhea" id="RHEA:42205"/>
    </physiologicalReaction>
</comment>
<comment type="catalytic activity">
    <reaction evidence="7">
        <text>cortisol + NAD(+) = cortisone + NADH + H(+)</text>
        <dbReference type="Rhea" id="RHEA:50208"/>
        <dbReference type="ChEBI" id="CHEBI:15378"/>
        <dbReference type="ChEBI" id="CHEBI:16962"/>
        <dbReference type="ChEBI" id="CHEBI:17650"/>
        <dbReference type="ChEBI" id="CHEBI:57540"/>
        <dbReference type="ChEBI" id="CHEBI:57945"/>
    </reaction>
    <physiologicalReaction direction="left-to-right" evidence="11">
        <dbReference type="Rhea" id="RHEA:50209"/>
    </physiologicalReaction>
</comment>
<comment type="catalytic activity">
    <reaction evidence="4">
        <text>11beta,17beta-dihydroxyandrost-4-ene-3-one + NAD(+) = 17beta-hydroxyandrost-4-ene-3,11-dione + NADH + H(+)</text>
        <dbReference type="Rhea" id="RHEA:69368"/>
        <dbReference type="ChEBI" id="CHEBI:15378"/>
        <dbReference type="ChEBI" id="CHEBI:34133"/>
        <dbReference type="ChEBI" id="CHEBI:57540"/>
        <dbReference type="ChEBI" id="CHEBI:57945"/>
        <dbReference type="ChEBI" id="CHEBI:81481"/>
    </reaction>
    <physiologicalReaction direction="left-to-right" evidence="4">
        <dbReference type="Rhea" id="RHEA:69369"/>
    </physiologicalReaction>
</comment>
<comment type="catalytic activity">
    <reaction evidence="4">
        <text>11beta-hydroxyandrost-4-ene-3,17-dione + NAD(+) = androst-4-ene-3,11,17-trione + NADH + H(+)</text>
        <dbReference type="Rhea" id="RHEA:69408"/>
        <dbReference type="ChEBI" id="CHEBI:2495"/>
        <dbReference type="ChEBI" id="CHEBI:15378"/>
        <dbReference type="ChEBI" id="CHEBI:27967"/>
        <dbReference type="ChEBI" id="CHEBI:57540"/>
        <dbReference type="ChEBI" id="CHEBI:57945"/>
    </reaction>
    <physiologicalReaction direction="left-to-right" evidence="4">
        <dbReference type="Rhea" id="RHEA:69409"/>
    </physiologicalReaction>
</comment>
<comment type="activity regulation">
    <text evidence="2">Inhibited by glycyrrhetinic acid, carbenoloxone, 11-alpha-OH-progesterone and 11-beta-OH-progesterone.</text>
</comment>
<comment type="biophysicochemical properties">
    <kinetics>
        <KM evidence="7">15 nM for cortisol</KM>
        <KM evidence="7">0.7 nM for corticosterone</KM>
        <Vmax evidence="7">1.9 nmol/h/ug enzyme using cortisol as substrate</Vmax>
        <Vmax evidence="7">1.2 nmol/h/ug enzyme using corticosterone as substrate</Vmax>
    </kinetics>
</comment>
<comment type="pathway">
    <text evidence="10">Steroid metabolism.</text>
</comment>
<comment type="subunit">
    <text evidence="4">Interacts with ligand-free cytoplasmic NR3C2.</text>
</comment>
<comment type="subcellular location">
    <subcellularLocation>
        <location evidence="4">Microsome</location>
    </subcellularLocation>
    <subcellularLocation>
        <location evidence="4">Endoplasmic reticulum</location>
    </subcellularLocation>
</comment>
<comment type="tissue specificity">
    <text evidence="7">Highly expressed in the kidney and adrenal and at lower levels in the colon.</text>
</comment>
<comment type="similarity">
    <text evidence="10">Belongs to the short-chain dehydrogenases/reductases (SDR) family.</text>
</comment>
<sequence>MESWPWPSGGAWLLVAARALLQLLRADLRLGRPLLAALALLAALDWLCQRLLPPLAALAVLAATGWIVLSRLARPQRLPVATRAVLITGCDSGFGNATAKKLDAMGFTVLATVLDLNSPGALELRACCSSRLQLLQMDLTKPADISRVLEFTKVHTASTGLWGLVNNAGQNIFVADAELCPVATFRTCMEVNFFGALEMTKGLLPLLRRSSGRIVTVSSPAGDMPFPCLAAYGTSKAALALLMGNFSCELLPWGVKVSIILPACFKTESVKDVHQWEERKQQLLATLPQELLQAYGEDYIEHLNGQFLHSLSQALPDLSPVVDAITDALLAAQPRRRYYPGHGLGLIYFIHYYLPEGCGRVSCSPSSSVPMCQEHYRLPAWPYLCPGHSPGPRPQTGPLSHCPVSRAHVEQLQQRRFLVPLLFFQVF</sequence>
<proteinExistence type="evidence at protein level"/>
<organism>
    <name type="scientific">Ovis aries</name>
    <name type="common">Sheep</name>
    <dbReference type="NCBI Taxonomy" id="9940"/>
    <lineage>
        <taxon>Eukaryota</taxon>
        <taxon>Metazoa</taxon>
        <taxon>Chordata</taxon>
        <taxon>Craniata</taxon>
        <taxon>Vertebrata</taxon>
        <taxon>Euteleostomi</taxon>
        <taxon>Mammalia</taxon>
        <taxon>Eutheria</taxon>
        <taxon>Laurasiatheria</taxon>
        <taxon>Artiodactyla</taxon>
        <taxon>Ruminantia</taxon>
        <taxon>Pecora</taxon>
        <taxon>Bovidae</taxon>
        <taxon>Caprinae</taxon>
        <taxon>Ovis</taxon>
    </lineage>
</organism>
<reference key="1">
    <citation type="journal article" date="1994" name="J. Biol. Chem.">
        <title>NAD(+)-dependent isoform of 11 beta-hydroxysteroid dehydrogenase. Cloning and characterization of cDNA from sheep kidney.</title>
        <authorList>
            <person name="Agarwal A.K."/>
            <person name="Mune T."/>
            <person name="Monder C."/>
            <person name="White P.C."/>
        </authorList>
    </citation>
    <scope>NUCLEOTIDE SEQUENCE [MRNA]</scope>
    <scope>FUNCTION</scope>
    <scope>CATALYTIC ACTIVITY</scope>
    <scope>BIOPHYSICOCHEMICAL PROPERTIES</scope>
    <scope>TISSUE SPECIFICITY</scope>
    <source>
        <tissue>Kidney</tissue>
    </source>
</reference>
<reference key="2">
    <citation type="journal article" date="1995" name="Endocr. Res.">
        <title>Cloning of cDNA encoding an NAD(+)-dependent isoform of 11 beta-hydroxysteroid dehydrogenase in sheep kidney.</title>
        <authorList>
            <person name="Agarwal A.K."/>
            <person name="Mune T."/>
            <person name="Monder C."/>
            <person name="White P.C."/>
        </authorList>
    </citation>
    <scope>NUCLEOTIDE SEQUENCE [MRNA]</scope>
    <scope>FUNCTION</scope>
    <source>
        <tissue>Kidney</tissue>
    </source>
</reference>
<keyword id="KW-0256">Endoplasmic reticulum</keyword>
<keyword id="KW-0443">Lipid metabolism</keyword>
<keyword id="KW-0492">Microsome</keyword>
<keyword id="KW-0520">NAD</keyword>
<keyword id="KW-0560">Oxidoreductase</keyword>
<keyword id="KW-1185">Reference proteome</keyword>
<keyword id="KW-0753">Steroid metabolism</keyword>
<accession>P50168</accession>